<organism>
    <name type="scientific">Vibrio vulnificus (strain YJ016)</name>
    <dbReference type="NCBI Taxonomy" id="196600"/>
    <lineage>
        <taxon>Bacteria</taxon>
        <taxon>Pseudomonadati</taxon>
        <taxon>Pseudomonadota</taxon>
        <taxon>Gammaproteobacteria</taxon>
        <taxon>Vibrionales</taxon>
        <taxon>Vibrionaceae</taxon>
        <taxon>Vibrio</taxon>
    </lineage>
</organism>
<protein>
    <recommendedName>
        <fullName evidence="1">Enoyl-[acyl-carrier-protein] reductase [NADH] 1</fullName>
        <shortName evidence="1">ENR 1</shortName>
        <ecNumber evidence="1">1.3.1.9</ecNumber>
    </recommendedName>
</protein>
<feature type="chain" id="PRO_0000220058" description="Enoyl-[acyl-carrier-protein] reductase [NADH] 1">
    <location>
        <begin position="1"/>
        <end position="400"/>
    </location>
</feature>
<feature type="active site" description="Proton donor" evidence="1">
    <location>
        <position position="235"/>
    </location>
</feature>
<feature type="binding site" evidence="1">
    <location>
        <begin position="48"/>
        <end position="53"/>
    </location>
    <ligand>
        <name>NAD(+)</name>
        <dbReference type="ChEBI" id="CHEBI:57540"/>
    </ligand>
</feature>
<feature type="binding site" evidence="1">
    <location>
        <begin position="74"/>
        <end position="75"/>
    </location>
    <ligand>
        <name>NAD(+)</name>
        <dbReference type="ChEBI" id="CHEBI:57540"/>
    </ligand>
</feature>
<feature type="binding site" evidence="1">
    <location>
        <begin position="111"/>
        <end position="112"/>
    </location>
    <ligand>
        <name>NAD(+)</name>
        <dbReference type="ChEBI" id="CHEBI:57540"/>
    </ligand>
</feature>
<feature type="binding site" evidence="1">
    <location>
        <begin position="139"/>
        <end position="140"/>
    </location>
    <ligand>
        <name>NAD(+)</name>
        <dbReference type="ChEBI" id="CHEBI:57540"/>
    </ligand>
</feature>
<feature type="binding site" evidence="1">
    <location>
        <position position="225"/>
    </location>
    <ligand>
        <name>substrate</name>
    </ligand>
</feature>
<feature type="binding site" evidence="1">
    <location>
        <position position="244"/>
    </location>
    <ligand>
        <name>NAD(+)</name>
        <dbReference type="ChEBI" id="CHEBI:57540"/>
    </ligand>
</feature>
<feature type="binding site" evidence="1">
    <location>
        <begin position="273"/>
        <end position="275"/>
    </location>
    <ligand>
        <name>NAD(+)</name>
        <dbReference type="ChEBI" id="CHEBI:57540"/>
    </ligand>
</feature>
<feature type="site" description="Plays an important role in discriminating NADH against NADPH" evidence="1">
    <location>
        <position position="75"/>
    </location>
</feature>
<accession>Q7MLJ0</accession>
<comment type="function">
    <text evidence="1">Involved in the final reduction of the elongation cycle of fatty acid synthesis (FAS II). Catalyzes the reduction of a carbon-carbon double bond in an enoyl moiety that is covalently linked to an acyl carrier protein (ACP).</text>
</comment>
<comment type="catalytic activity">
    <reaction evidence="1">
        <text>a 2,3-saturated acyl-[ACP] + NAD(+) = a (2E)-enoyl-[ACP] + NADH + H(+)</text>
        <dbReference type="Rhea" id="RHEA:10240"/>
        <dbReference type="Rhea" id="RHEA-COMP:9925"/>
        <dbReference type="Rhea" id="RHEA-COMP:9926"/>
        <dbReference type="ChEBI" id="CHEBI:15378"/>
        <dbReference type="ChEBI" id="CHEBI:57540"/>
        <dbReference type="ChEBI" id="CHEBI:57945"/>
        <dbReference type="ChEBI" id="CHEBI:78784"/>
        <dbReference type="ChEBI" id="CHEBI:78785"/>
        <dbReference type="EC" id="1.3.1.9"/>
    </reaction>
</comment>
<comment type="pathway">
    <text evidence="1">Lipid metabolism; fatty acid biosynthesis.</text>
</comment>
<comment type="subunit">
    <text evidence="1">Monomer.</text>
</comment>
<comment type="similarity">
    <text evidence="1">Belongs to the TER reductase family.</text>
</comment>
<evidence type="ECO:0000255" key="1">
    <source>
        <dbReference type="HAMAP-Rule" id="MF_01838"/>
    </source>
</evidence>
<gene>
    <name evidence="1" type="primary">fabV1</name>
    <name type="ordered locus">VV1437</name>
</gene>
<keyword id="KW-0275">Fatty acid biosynthesis</keyword>
<keyword id="KW-0276">Fatty acid metabolism</keyword>
<keyword id="KW-0444">Lipid biosynthesis</keyword>
<keyword id="KW-0443">Lipid metabolism</keyword>
<keyword id="KW-0520">NAD</keyword>
<keyword id="KW-0560">Oxidoreductase</keyword>
<proteinExistence type="inferred from homology"/>
<sequence>MIIKPKIRGFICTTTHPVGCEANVKEQIAYTKAQGPIKNAPKRVLVVGASSGYGLSSRIAAAFGGGAATIGVFFEKEGSEKKPGTAGFYNAAAFEKLAREEGLYAKSLNGDAFSNEAKQKTIDLIKEDLGQVDMVVYSLASPVRKLPETGELIRSALKPIGQTYTSTAVDTNKDIIIEASVEPATEQEIQDTVTVMGGEDWELWINALAEAGVLAEGCKTVAYSYIGTELTWPIYWDGALGKAKMDLDRAASALNDKLSATGGSANVAVLKSVVTQASSAIPVMPLYIAMVFKKMREEGVHEGCMEQIYRMFSQRLYKEDGSAAEVDEKNRLRLDDWELRDDIQEHCRNLWPQITTENLKELTDYVEYKEEFLKLFGFGIDGVDYEADVNPDVATDFIAI</sequence>
<name>FABV1_VIBVY</name>
<dbReference type="EC" id="1.3.1.9" evidence="1"/>
<dbReference type="EMBL" id="BA000037">
    <property type="protein sequence ID" value="BAC94201.1"/>
    <property type="molecule type" value="Genomic_DNA"/>
</dbReference>
<dbReference type="RefSeq" id="WP_011150089.1">
    <property type="nucleotide sequence ID" value="NC_005139.1"/>
</dbReference>
<dbReference type="SMR" id="Q7MLJ0"/>
<dbReference type="STRING" id="672.VV93_v1c13490"/>
<dbReference type="KEGG" id="vvy:VV1437"/>
<dbReference type="PATRIC" id="fig|196600.6.peg.1424"/>
<dbReference type="eggNOG" id="COG3007">
    <property type="taxonomic scope" value="Bacteria"/>
</dbReference>
<dbReference type="HOGENOM" id="CLU_057698_1_0_6"/>
<dbReference type="UniPathway" id="UPA00094"/>
<dbReference type="Proteomes" id="UP000002675">
    <property type="component" value="Chromosome I"/>
</dbReference>
<dbReference type="GO" id="GO:0004318">
    <property type="term" value="F:enoyl-[acyl-carrier-protein] reductase (NADH) activity"/>
    <property type="evidence" value="ECO:0007669"/>
    <property type="project" value="UniProtKB-UniRule"/>
</dbReference>
<dbReference type="GO" id="GO:0051287">
    <property type="term" value="F:NAD binding"/>
    <property type="evidence" value="ECO:0007669"/>
    <property type="project" value="UniProtKB-UniRule"/>
</dbReference>
<dbReference type="GO" id="GO:0050343">
    <property type="term" value="F:trans-2-enoyl-CoA reductase (NADH) activity"/>
    <property type="evidence" value="ECO:0007669"/>
    <property type="project" value="TreeGrafter"/>
</dbReference>
<dbReference type="GO" id="GO:0006633">
    <property type="term" value="P:fatty acid biosynthetic process"/>
    <property type="evidence" value="ECO:0007669"/>
    <property type="project" value="UniProtKB-UniRule"/>
</dbReference>
<dbReference type="FunFam" id="3.40.50.720:FF:000221">
    <property type="entry name" value="Enoyl-[acyl-carrier-protein] reductase [NADH]"/>
    <property type="match status" value="1"/>
</dbReference>
<dbReference type="Gene3D" id="3.40.50.720">
    <property type="entry name" value="NAD(P)-binding Rossmann-like Domain"/>
    <property type="match status" value="1"/>
</dbReference>
<dbReference type="HAMAP" id="MF_01838">
    <property type="entry name" value="FabV_reductase"/>
    <property type="match status" value="1"/>
</dbReference>
<dbReference type="InterPro" id="IPR024906">
    <property type="entry name" value="Eno_Rdtase_FAD-bd_dom"/>
</dbReference>
<dbReference type="InterPro" id="IPR024910">
    <property type="entry name" value="Enoyl-CoA_Rdtase_cat_dom"/>
</dbReference>
<dbReference type="InterPro" id="IPR050048">
    <property type="entry name" value="FabV-like_NADH_b"/>
</dbReference>
<dbReference type="InterPro" id="IPR010758">
    <property type="entry name" value="Trans-2-enoyl-CoA_reductase"/>
</dbReference>
<dbReference type="NCBIfam" id="NF043048">
    <property type="entry name" value="EnoyACPredFabV"/>
    <property type="match status" value="1"/>
</dbReference>
<dbReference type="NCBIfam" id="NF010177">
    <property type="entry name" value="PRK13656.1"/>
    <property type="match status" value="1"/>
</dbReference>
<dbReference type="PANTHER" id="PTHR37480">
    <property type="entry name" value="ENOYL-[ACYL-CARRIER-PROTEIN] REDUCTASE [NADH]"/>
    <property type="match status" value="1"/>
</dbReference>
<dbReference type="PANTHER" id="PTHR37480:SF1">
    <property type="entry name" value="ENOYL-[ACYL-CARRIER-PROTEIN] REDUCTASE [NADH]"/>
    <property type="match status" value="1"/>
</dbReference>
<dbReference type="Pfam" id="PF07055">
    <property type="entry name" value="Eno-Rase_FAD_bd"/>
    <property type="match status" value="1"/>
</dbReference>
<dbReference type="Pfam" id="PF12242">
    <property type="entry name" value="Eno-Rase_NADH_b"/>
    <property type="match status" value="1"/>
</dbReference>
<dbReference type="Pfam" id="PF12241">
    <property type="entry name" value="Enoyl_reductase"/>
    <property type="match status" value="1"/>
</dbReference>
<reference key="1">
    <citation type="journal article" date="2003" name="Genome Res.">
        <title>Comparative genome analysis of Vibrio vulnificus, a marine pathogen.</title>
        <authorList>
            <person name="Chen C.-Y."/>
            <person name="Wu K.-M."/>
            <person name="Chang Y.-C."/>
            <person name="Chang C.-H."/>
            <person name="Tsai H.-C."/>
            <person name="Liao T.-L."/>
            <person name="Liu Y.-M."/>
            <person name="Chen H.-J."/>
            <person name="Shen A.B.-T."/>
            <person name="Li J.-C."/>
            <person name="Su T.-L."/>
            <person name="Shao C.-P."/>
            <person name="Lee C.-T."/>
            <person name="Hor L.-I."/>
            <person name="Tsai S.-F."/>
        </authorList>
    </citation>
    <scope>NUCLEOTIDE SEQUENCE [LARGE SCALE GENOMIC DNA]</scope>
    <source>
        <strain>YJ016</strain>
    </source>
</reference>